<proteinExistence type="inferred from homology"/>
<reference key="1">
    <citation type="journal article" date="2011" name="J. Bacteriol.">
        <title>Comparative genomics of 28 Salmonella enterica isolates: evidence for CRISPR-mediated adaptive sublineage evolution.</title>
        <authorList>
            <person name="Fricke W.F."/>
            <person name="Mammel M.K."/>
            <person name="McDermott P.F."/>
            <person name="Tartera C."/>
            <person name="White D.G."/>
            <person name="Leclerc J.E."/>
            <person name="Ravel J."/>
            <person name="Cebula T.A."/>
        </authorList>
    </citation>
    <scope>NUCLEOTIDE SEQUENCE [LARGE SCALE GENOMIC DNA]</scope>
    <source>
        <strain>SL254</strain>
    </source>
</reference>
<sequence length="290" mass="32602">MEWSLTQSKLLAFHRLMRTDKPIGALLLLWPTLWALWVATPGMPQLWILAVFVAGVWLMRAAGCVVNDYADRKFDGHVKRTVNRPLPSGAVTEKEARNLFVVLVLLAFLLVLTLNAMTILLSVAALALAWVYPFMKRYTHLPQVVLGAAFGWSIPMAFAAVSESLPLSCWLMFLANILWAVAYDTQYAMVDRDDDIKIGIKSTAILFGRYDTLIIGILQLGVMALMALIGWLNGLGWGYYWAVLVAGALFVYQQKLIANREREACFKAFMNNNYVGLVLFLGLAMSYWHF</sequence>
<feature type="chain" id="PRO_1000186686" description="4-hydroxybenzoate octaprenyltransferase">
    <location>
        <begin position="1"/>
        <end position="290"/>
    </location>
</feature>
<feature type="transmembrane region" description="Helical" evidence="1">
    <location>
        <begin position="23"/>
        <end position="43"/>
    </location>
</feature>
<feature type="transmembrane region" description="Helical" evidence="1">
    <location>
        <begin position="46"/>
        <end position="66"/>
    </location>
</feature>
<feature type="transmembrane region" description="Helical" evidence="1">
    <location>
        <begin position="99"/>
        <end position="119"/>
    </location>
</feature>
<feature type="transmembrane region" description="Helical" evidence="1">
    <location>
        <begin position="141"/>
        <end position="161"/>
    </location>
</feature>
<feature type="transmembrane region" description="Helical" evidence="1">
    <location>
        <begin position="163"/>
        <end position="183"/>
    </location>
</feature>
<feature type="transmembrane region" description="Helical" evidence="1">
    <location>
        <begin position="212"/>
        <end position="232"/>
    </location>
</feature>
<feature type="transmembrane region" description="Helical" evidence="1">
    <location>
        <begin position="233"/>
        <end position="253"/>
    </location>
</feature>
<feature type="transmembrane region" description="Helical" evidence="1">
    <location>
        <begin position="268"/>
        <end position="288"/>
    </location>
</feature>
<keyword id="KW-0997">Cell inner membrane</keyword>
<keyword id="KW-1003">Cell membrane</keyword>
<keyword id="KW-0460">Magnesium</keyword>
<keyword id="KW-0472">Membrane</keyword>
<keyword id="KW-0808">Transferase</keyword>
<keyword id="KW-0812">Transmembrane</keyword>
<keyword id="KW-1133">Transmembrane helix</keyword>
<keyword id="KW-0831">Ubiquinone biosynthesis</keyword>
<organism>
    <name type="scientific">Salmonella newport (strain SL254)</name>
    <dbReference type="NCBI Taxonomy" id="423368"/>
    <lineage>
        <taxon>Bacteria</taxon>
        <taxon>Pseudomonadati</taxon>
        <taxon>Pseudomonadota</taxon>
        <taxon>Gammaproteobacteria</taxon>
        <taxon>Enterobacterales</taxon>
        <taxon>Enterobacteriaceae</taxon>
        <taxon>Salmonella</taxon>
    </lineage>
</organism>
<dbReference type="EC" id="2.5.1.39" evidence="1"/>
<dbReference type="EMBL" id="CP001113">
    <property type="protein sequence ID" value="ACF61319.1"/>
    <property type="molecule type" value="Genomic_DNA"/>
</dbReference>
<dbReference type="RefSeq" id="WP_000455249.1">
    <property type="nucleotide sequence ID" value="NZ_CCMR01000003.1"/>
</dbReference>
<dbReference type="SMR" id="B4T1S9"/>
<dbReference type="KEGG" id="see:SNSL254_A4577"/>
<dbReference type="HOGENOM" id="CLU_034879_1_0_6"/>
<dbReference type="UniPathway" id="UPA00232"/>
<dbReference type="Proteomes" id="UP000008824">
    <property type="component" value="Chromosome"/>
</dbReference>
<dbReference type="GO" id="GO:0005886">
    <property type="term" value="C:plasma membrane"/>
    <property type="evidence" value="ECO:0007669"/>
    <property type="project" value="UniProtKB-SubCell"/>
</dbReference>
<dbReference type="GO" id="GO:0008412">
    <property type="term" value="F:4-hydroxybenzoate polyprenyltransferase activity"/>
    <property type="evidence" value="ECO:0007669"/>
    <property type="project" value="UniProtKB-UniRule"/>
</dbReference>
<dbReference type="GO" id="GO:0006744">
    <property type="term" value="P:ubiquinone biosynthetic process"/>
    <property type="evidence" value="ECO:0007669"/>
    <property type="project" value="UniProtKB-UniRule"/>
</dbReference>
<dbReference type="CDD" id="cd13959">
    <property type="entry name" value="PT_UbiA_COQ2"/>
    <property type="match status" value="1"/>
</dbReference>
<dbReference type="FunFam" id="1.10.357.140:FF:000002">
    <property type="entry name" value="4-hydroxybenzoate octaprenyltransferase"/>
    <property type="match status" value="1"/>
</dbReference>
<dbReference type="FunFam" id="1.20.120.1780:FF:000001">
    <property type="entry name" value="4-hydroxybenzoate octaprenyltransferase"/>
    <property type="match status" value="1"/>
</dbReference>
<dbReference type="Gene3D" id="1.10.357.140">
    <property type="entry name" value="UbiA prenyltransferase"/>
    <property type="match status" value="1"/>
</dbReference>
<dbReference type="Gene3D" id="1.20.120.1780">
    <property type="entry name" value="UbiA prenyltransferase"/>
    <property type="match status" value="1"/>
</dbReference>
<dbReference type="HAMAP" id="MF_01635">
    <property type="entry name" value="UbiA"/>
    <property type="match status" value="1"/>
</dbReference>
<dbReference type="InterPro" id="IPR006370">
    <property type="entry name" value="HB_polyprenyltransferase-like"/>
</dbReference>
<dbReference type="InterPro" id="IPR039653">
    <property type="entry name" value="Prenyltransferase"/>
</dbReference>
<dbReference type="InterPro" id="IPR000537">
    <property type="entry name" value="UbiA_prenyltransferase"/>
</dbReference>
<dbReference type="InterPro" id="IPR030470">
    <property type="entry name" value="UbiA_prenylTrfase_CS"/>
</dbReference>
<dbReference type="InterPro" id="IPR044878">
    <property type="entry name" value="UbiA_sf"/>
</dbReference>
<dbReference type="NCBIfam" id="TIGR01474">
    <property type="entry name" value="ubiA_proteo"/>
    <property type="match status" value="1"/>
</dbReference>
<dbReference type="PANTHER" id="PTHR11048:SF28">
    <property type="entry name" value="4-HYDROXYBENZOATE POLYPRENYLTRANSFERASE, MITOCHONDRIAL"/>
    <property type="match status" value="1"/>
</dbReference>
<dbReference type="PANTHER" id="PTHR11048">
    <property type="entry name" value="PRENYLTRANSFERASES"/>
    <property type="match status" value="1"/>
</dbReference>
<dbReference type="Pfam" id="PF01040">
    <property type="entry name" value="UbiA"/>
    <property type="match status" value="1"/>
</dbReference>
<dbReference type="PROSITE" id="PS00943">
    <property type="entry name" value="UBIA"/>
    <property type="match status" value="1"/>
</dbReference>
<name>UBIA_SALNS</name>
<gene>
    <name evidence="1" type="primary">ubiA</name>
    <name type="ordered locus">SNSL254_A4577</name>
</gene>
<protein>
    <recommendedName>
        <fullName evidence="1">4-hydroxybenzoate octaprenyltransferase</fullName>
        <ecNumber evidence="1">2.5.1.39</ecNumber>
    </recommendedName>
    <alternativeName>
        <fullName evidence="1">4-HB polyprenyltransferase</fullName>
    </alternativeName>
</protein>
<evidence type="ECO:0000255" key="1">
    <source>
        <dbReference type="HAMAP-Rule" id="MF_01635"/>
    </source>
</evidence>
<comment type="function">
    <text evidence="1">Catalyzes the prenylation of para-hydroxybenzoate (PHB) with an all-trans polyprenyl group. Mediates the second step in the final reaction sequence of ubiquinone-8 (UQ-8) biosynthesis, which is the condensation of the polyisoprenoid side chain with PHB, generating the first membrane-bound Q intermediate 3-octaprenyl-4-hydroxybenzoate.</text>
</comment>
<comment type="catalytic activity">
    <reaction evidence="1">
        <text>all-trans-octaprenyl diphosphate + 4-hydroxybenzoate = 4-hydroxy-3-(all-trans-octaprenyl)benzoate + diphosphate</text>
        <dbReference type="Rhea" id="RHEA:27782"/>
        <dbReference type="ChEBI" id="CHEBI:1617"/>
        <dbReference type="ChEBI" id="CHEBI:17879"/>
        <dbReference type="ChEBI" id="CHEBI:33019"/>
        <dbReference type="ChEBI" id="CHEBI:57711"/>
        <dbReference type="EC" id="2.5.1.39"/>
    </reaction>
</comment>
<comment type="cofactor">
    <cofactor evidence="1">
        <name>Mg(2+)</name>
        <dbReference type="ChEBI" id="CHEBI:18420"/>
    </cofactor>
</comment>
<comment type="pathway">
    <text evidence="1">Cofactor biosynthesis; ubiquinone biosynthesis.</text>
</comment>
<comment type="subcellular location">
    <subcellularLocation>
        <location evidence="1">Cell inner membrane</location>
        <topology evidence="1">Multi-pass membrane protein</topology>
    </subcellularLocation>
</comment>
<comment type="similarity">
    <text evidence="1">Belongs to the UbiA prenyltransferase family.</text>
</comment>
<accession>B4T1S9</accession>